<proteinExistence type="evidence at protein level"/>
<name>GL_HCMVM</name>
<comment type="function">
    <text evidence="1 4 5 7">The heterodimer glycoprotein H-glycoprotein L is required for the fusion of viral and plasma membranes leading to virus entry into the host cell. Acts as a functional inhibitor of gH and maintains gH in an inhibited form. Upon binding to host integrins, gL dissociates from gH leading to activation of the viral fusion glycoproteins gB and gH (By similarity). In human cytomegalovirus, forms two distincts complexes to mediate viral entry, a trimer and a pentamer at the surface of the virion envelope. The gH-gL-gO trimer is required for infection in fibroblasts by interacting with host PDGFRA, and in glioblastoma cells by interacting with host EPHA2 (PubMed:28403202, PubMed:37146061). The gH-gL-UL128-UL130-UL131A pentamer is essential for viral entry in epithelial, endothelial and myeloid cells via interaction with host NRP2 (PubMed:30057110).</text>
</comment>
<comment type="subunit">
    <text evidence="1 3 4 5 6 7">Interacts with glycoprotein H (gH); this interaction is necessary for the correct processing and cell surface expression of gH (By similarity). Forms the envelope pentamer complex (PC) composed of gH, gL, UL128, UL130, and UL131A (PubMed:17942555). The pentamer interacts with host NRP2 (PubMed:30057110). Forms the envelope trimer complex composed of gH, gL, and gO (PubMed:33626330). The trimer interacts with host PDGFRA (PubMed:28403202, PubMed:33626330). The trimer also interacts with host EPHA2 (PubMed:37146061).</text>
</comment>
<comment type="subcellular location">
    <subcellularLocation>
        <location evidence="1">Virion membrane</location>
        <topology evidence="1">Peripheral membrane protein</topology>
        <orientation evidence="1">Extracellular side</orientation>
    </subcellularLocation>
    <subcellularLocation>
        <location evidence="1">Host cell membrane</location>
        <topology evidence="1">Peripheral membrane protein</topology>
        <orientation evidence="1">Extracellular side</orientation>
    </subcellularLocation>
    <subcellularLocation>
        <location evidence="1">Host Golgi apparatus</location>
        <location evidence="1">Host trans-Golgi network</location>
    </subcellularLocation>
    <text evidence="1">gL associates with the extravirion surface through its binding to gH. During virion morphogenesis, this protein probably accumulates in the host trans-Golgi where secondary envelopment occurs.</text>
</comment>
<comment type="similarity">
    <text evidence="2">Belongs to the herpesviridae glycoprotein L (gL) family. Betaherpesvirinae gL subfamily.</text>
</comment>
<dbReference type="EMBL" id="AY446894">
    <property type="protein sequence ID" value="AAR31659.1"/>
    <property type="molecule type" value="Genomic_DNA"/>
</dbReference>
<dbReference type="RefSeq" id="YP_081555.1">
    <property type="nucleotide sequence ID" value="NC_006273.2"/>
</dbReference>
<dbReference type="PDB" id="7LBE">
    <property type="method" value="EM"/>
    <property type="resolution" value="2.90 A"/>
    <property type="chains" value="B=1-278"/>
</dbReference>
<dbReference type="PDB" id="7LBF">
    <property type="method" value="EM"/>
    <property type="resolution" value="2.80 A"/>
    <property type="chains" value="B=1-278"/>
</dbReference>
<dbReference type="PDB" id="7LBG">
    <property type="method" value="EM"/>
    <property type="resolution" value="2.60 A"/>
    <property type="chains" value="B=1-278"/>
</dbReference>
<dbReference type="PDB" id="7T4Q">
    <property type="method" value="EM"/>
    <property type="resolution" value="2.90 A"/>
    <property type="chains" value="B=1-278"/>
</dbReference>
<dbReference type="PDB" id="7T4R">
    <property type="method" value="EM"/>
    <property type="resolution" value="3.30 A"/>
    <property type="chains" value="C/L=1-278"/>
</dbReference>
<dbReference type="PDB" id="7T4S">
    <property type="method" value="EM"/>
    <property type="resolution" value="3.10 A"/>
    <property type="chains" value="B=1-278"/>
</dbReference>
<dbReference type="PDBsum" id="7LBE"/>
<dbReference type="PDBsum" id="7LBF"/>
<dbReference type="PDBsum" id="7LBG"/>
<dbReference type="PDBsum" id="7T4Q"/>
<dbReference type="PDBsum" id="7T4R"/>
<dbReference type="PDBsum" id="7T4S"/>
<dbReference type="EMDB" id="EMD-23252"/>
<dbReference type="EMDB" id="EMD-23253"/>
<dbReference type="EMDB" id="EMD-23254"/>
<dbReference type="SMR" id="F5HCH8"/>
<dbReference type="TCDB" id="1.G.22.1.1">
    <property type="family name" value="the cytomegalovirus (human herpesvirus 5) glycoprotein go (go) family"/>
</dbReference>
<dbReference type="DNASU" id="3077416"/>
<dbReference type="GeneID" id="3077416"/>
<dbReference type="KEGG" id="vg:3077416"/>
<dbReference type="Reactome" id="R-HSA-9609690">
    <property type="pathway name" value="HCMV Early Events"/>
</dbReference>
<dbReference type="Reactome" id="R-HSA-9610379">
    <property type="pathway name" value="HCMV Late Events"/>
</dbReference>
<dbReference type="Proteomes" id="UP000000938">
    <property type="component" value="Segment"/>
</dbReference>
<dbReference type="GO" id="GO:0044177">
    <property type="term" value="C:host cell Golgi apparatus"/>
    <property type="evidence" value="ECO:0007669"/>
    <property type="project" value="UniProtKB-SubCell"/>
</dbReference>
<dbReference type="GO" id="GO:0020002">
    <property type="term" value="C:host cell plasma membrane"/>
    <property type="evidence" value="ECO:0007669"/>
    <property type="project" value="UniProtKB-SubCell"/>
</dbReference>
<dbReference type="GO" id="GO:0005886">
    <property type="term" value="C:plasma membrane"/>
    <property type="evidence" value="ECO:0000304"/>
    <property type="project" value="Reactome"/>
</dbReference>
<dbReference type="GO" id="GO:0019031">
    <property type="term" value="C:viral envelope"/>
    <property type="evidence" value="ECO:0000304"/>
    <property type="project" value="Reactome"/>
</dbReference>
<dbReference type="GO" id="GO:0055036">
    <property type="term" value="C:virion membrane"/>
    <property type="evidence" value="ECO:0007669"/>
    <property type="project" value="UniProtKB-SubCell"/>
</dbReference>
<dbReference type="GO" id="GO:0098670">
    <property type="term" value="P:entry receptor-mediated virion attachment to host cell"/>
    <property type="evidence" value="ECO:0007669"/>
    <property type="project" value="UniProtKB-KW"/>
</dbReference>
<dbReference type="GO" id="GO:0019064">
    <property type="term" value="P:fusion of virus membrane with host plasma membrane"/>
    <property type="evidence" value="ECO:0007669"/>
    <property type="project" value="UniProtKB-UniRule"/>
</dbReference>
<dbReference type="GO" id="GO:0046718">
    <property type="term" value="P:symbiont entry into host cell"/>
    <property type="evidence" value="ECO:0007669"/>
    <property type="project" value="UniProtKB-KW"/>
</dbReference>
<dbReference type="HAMAP" id="MF_04036">
    <property type="entry name" value="HSV_GL_betahv"/>
    <property type="match status" value="1"/>
</dbReference>
<dbReference type="InterPro" id="IPR002689">
    <property type="entry name" value="Cytomegalo_gL"/>
</dbReference>
<dbReference type="Pfam" id="PF01801">
    <property type="entry name" value="Cytomega_gL"/>
    <property type="match status" value="1"/>
</dbReference>
<dbReference type="PROSITE" id="PS52025">
    <property type="entry name" value="GL_BHV"/>
    <property type="match status" value="1"/>
</dbReference>
<sequence>MCRRPDCGFSFSPGPVILLWCCLLLPIVSSAAVSVAPTAAEKVPAECPELTRRCLLGEVFEGDKYESWLRPLVNVTGRDGPLSQLIRYRPVTPEAANSVLLDEAFLDTLALLYNNPDQLRALLTLLSSDTAPRWMTVMRGYSECGDGSPAVYTCVDDLCRGYDLTRLSYGRSIFTEHVLGFELVPPSLFNVVVAIRNEATRTNRAVRLPVSTAAAPEGITLFYGLYNAVKEFCLRHQLDPPLLRHLDKYYAGLPPELKQTRVNLPAHSRYGPQAVDAR</sequence>
<protein>
    <recommendedName>
        <fullName evidence="1">Envelope glycoprotein L</fullName>
        <shortName evidence="1">gL</shortName>
    </recommendedName>
</protein>
<evidence type="ECO:0000255" key="1">
    <source>
        <dbReference type="HAMAP-Rule" id="MF_04036"/>
    </source>
</evidence>
<evidence type="ECO:0000255" key="2">
    <source>
        <dbReference type="PROSITE-ProRule" id="PRU01369"/>
    </source>
</evidence>
<evidence type="ECO:0000269" key="3">
    <source>
    </source>
</evidence>
<evidence type="ECO:0000269" key="4">
    <source>
    </source>
</evidence>
<evidence type="ECO:0000269" key="5">
    <source>
    </source>
</evidence>
<evidence type="ECO:0000269" key="6">
    <source>
    </source>
</evidence>
<evidence type="ECO:0000269" key="7">
    <source>
    </source>
</evidence>
<evidence type="ECO:0007744" key="8">
    <source>
        <dbReference type="PDB" id="7LBE"/>
    </source>
</evidence>
<evidence type="ECO:0007744" key="9">
    <source>
        <dbReference type="PDB" id="7LBF"/>
    </source>
</evidence>
<evidence type="ECO:0007744" key="10">
    <source>
        <dbReference type="PDB" id="7LBG"/>
    </source>
</evidence>
<evidence type="ECO:0007829" key="11">
    <source>
        <dbReference type="PDB" id="7LBE"/>
    </source>
</evidence>
<evidence type="ECO:0007829" key="12">
    <source>
        <dbReference type="PDB" id="7LBF"/>
    </source>
</evidence>
<evidence type="ECO:0007829" key="13">
    <source>
        <dbReference type="PDB" id="7LBG"/>
    </source>
</evidence>
<organismHost>
    <name type="scientific">Homo sapiens</name>
    <name type="common">Human</name>
    <dbReference type="NCBI Taxonomy" id="9606"/>
</organismHost>
<accession>F5HCH8</accession>
<reference key="1">
    <citation type="journal article" date="2004" name="J. Gen. Virol.">
        <title>Genetic content of wild-type human cytomegalovirus.</title>
        <authorList>
            <person name="Dolan A."/>
            <person name="Cunningham C."/>
            <person name="Hector R.D."/>
            <person name="Hassan-Walker A.F."/>
            <person name="Lee L."/>
            <person name="Addison C."/>
            <person name="Dargan D.J."/>
            <person name="McGeoch D.J."/>
            <person name="Gatherer D."/>
            <person name="Emery V.C."/>
            <person name="Griffiths P.D."/>
            <person name="Sinzger C."/>
            <person name="McSharry B.P."/>
            <person name="Wilkinson G.W.G."/>
            <person name="Davison A.J."/>
        </authorList>
    </citation>
    <scope>NUCLEOTIDE SEQUENCE [LARGE SCALE GENOMIC DNA]</scope>
</reference>
<reference key="2">
    <citation type="journal article" date="2008" name="J. Virol.">
        <title>Characterization of the human cytomegalovirus gH/gL/UL128-131 complex that mediates entry into epithelial and endothelial cells.</title>
        <authorList>
            <person name="Ryckman B.J."/>
            <person name="Rainish B.L."/>
            <person name="Chase M.C."/>
            <person name="Borton J.A."/>
            <person name="Nelson J.A."/>
            <person name="Jarvis M.A."/>
            <person name="Johnson D.C."/>
        </authorList>
    </citation>
    <scope>INTERACTION WITH UL128; UL130; UL131 AND GH</scope>
    <source>
        <strain>TR</strain>
    </source>
</reference>
<reference key="3">
    <citation type="journal article" date="2017" name="PLoS Pathog.">
        <title>Human cytomegalovirus glycoprotein complex gH/gL/gO uses PDGFR-alpha as a key for entry.</title>
        <authorList>
            <person name="Wu Y."/>
            <person name="Prager A."/>
            <person name="Boos S."/>
            <person name="Resch M."/>
            <person name="Brizic I."/>
            <person name="Mach M."/>
            <person name="Wildner S."/>
            <person name="Scrivano L."/>
            <person name="Adler B."/>
        </authorList>
    </citation>
    <scope>FUNCTION</scope>
    <scope>INTERACTION WITH GH AND HOST PDGFRA</scope>
</reference>
<reference key="4">
    <citation type="journal article" date="2018" name="Cell">
        <title>An Unbiased Screen for Human Cytomegalovirus Identifies Neuropilin-2 as a Central Viral Receptor.</title>
        <authorList>
            <person name="Martinez-Martin N."/>
            <person name="Marcandalli J."/>
            <person name="Huang C.S."/>
            <person name="Arthur C.P."/>
            <person name="Perotti M."/>
            <person name="Foglierini M."/>
            <person name="Ho H."/>
            <person name="Dosey A.M."/>
            <person name="Shriver S."/>
            <person name="Payandeh J."/>
            <person name="Leitner A."/>
            <person name="Lanzavecchia A."/>
            <person name="Perez L."/>
            <person name="Ciferri C."/>
        </authorList>
    </citation>
    <scope>FUNCTION</scope>
    <scope>INTERACTION WITH HOST NRP2</scope>
</reference>
<reference key="5">
    <citation type="journal article" date="2023" name="PLoS Pathog.">
        <title>EphA2 is a functional entry receptor for HCMV infection of glioblastoma cells.</title>
        <authorList>
            <person name="Dong X.D."/>
            <person name="Li Y."/>
            <person name="Li Y."/>
            <person name="Sun C."/>
            <person name="Liu S.X."/>
            <person name="Duan H."/>
            <person name="Cui R."/>
            <person name="Zhong Q."/>
            <person name="Mou Y.G."/>
            <person name="Wen L."/>
            <person name="Yang B."/>
            <person name="Zeng M.S."/>
            <person name="Luo M.H."/>
            <person name="Zhang H."/>
        </authorList>
    </citation>
    <scope>FUNCTION</scope>
    <scope>INTERACTION WITH HOST EPHA2</scope>
</reference>
<reference evidence="8 9 10" key="6">
    <citation type="journal article" date="2021" name="Cell">
        <title>Structures of HCMV Trimer reveal the basis for receptor recognition and cell entry.</title>
        <authorList>
            <person name="Kschonsak M."/>
            <person name="Rouge L."/>
            <person name="Arthur C.P."/>
            <person name="Hoangdung H."/>
            <person name="Patel N."/>
            <person name="Kim I."/>
            <person name="Johnson M.C."/>
            <person name="Kraft E."/>
            <person name="Rohou A.L."/>
            <person name="Gill A."/>
            <person name="Martinez-Martin N."/>
            <person name="Payandeh J."/>
            <person name="Ciferri C."/>
        </authorList>
    </citation>
    <scope>STRUCTURE BY ELECTRON MICROSCOPY (2.60 ANGSTROMS)</scope>
    <scope>DISULFIDE BOND</scope>
    <scope>INTERACTION WITH GH; GO AND HOST PDGFRA</scope>
</reference>
<feature type="signal peptide" evidence="1">
    <location>
        <begin position="1"/>
        <end position="30"/>
    </location>
</feature>
<feature type="chain" id="PRO_0000416445" description="Envelope glycoprotein L" evidence="1">
    <location>
        <begin position="31"/>
        <end position="278"/>
    </location>
</feature>
<feature type="domain" description="gL betaherpesvirus-type" evidence="2">
    <location>
        <begin position="43"/>
        <end position="256"/>
    </location>
</feature>
<feature type="disulfide bond" description="Interchain" evidence="2">
    <location>
        <position position="47"/>
    </location>
</feature>
<feature type="disulfide bond" description="Interchain" evidence="2">
    <location>
        <position position="54"/>
    </location>
</feature>
<feature type="disulfide bond" description="Interchain" evidence="2">
    <location>
        <position position="144"/>
    </location>
</feature>
<feature type="disulfide bond" evidence="2">
    <location>
        <begin position="154"/>
        <end position="159"/>
    </location>
</feature>
<feature type="helix" evidence="13">
    <location>
        <begin position="47"/>
        <end position="55"/>
    </location>
</feature>
<feature type="helix" evidence="13">
    <location>
        <begin position="67"/>
        <end position="69"/>
    </location>
</feature>
<feature type="strand" evidence="12">
    <location>
        <begin position="77"/>
        <end position="79"/>
    </location>
</feature>
<feature type="helix" evidence="13">
    <location>
        <begin position="84"/>
        <end position="86"/>
    </location>
</feature>
<feature type="strand" evidence="11">
    <location>
        <begin position="94"/>
        <end position="96"/>
    </location>
</feature>
<feature type="strand" evidence="13">
    <location>
        <begin position="98"/>
        <end position="100"/>
    </location>
</feature>
<feature type="helix" evidence="13">
    <location>
        <begin position="103"/>
        <end position="112"/>
    </location>
</feature>
<feature type="helix" evidence="13">
    <location>
        <begin position="118"/>
        <end position="127"/>
    </location>
</feature>
<feature type="helix" evidence="13">
    <location>
        <begin position="133"/>
        <end position="136"/>
    </location>
</feature>
<feature type="strand" evidence="13">
    <location>
        <begin position="141"/>
        <end position="145"/>
    </location>
</feature>
<feature type="strand" evidence="13">
    <location>
        <begin position="151"/>
        <end position="155"/>
    </location>
</feature>
<feature type="strand" evidence="13">
    <location>
        <begin position="158"/>
        <end position="162"/>
    </location>
</feature>
<feature type="helix" evidence="13">
    <location>
        <begin position="164"/>
        <end position="166"/>
    </location>
</feature>
<feature type="strand" evidence="13">
    <location>
        <begin position="169"/>
        <end position="171"/>
    </location>
</feature>
<feature type="helix" evidence="12">
    <location>
        <begin position="173"/>
        <end position="175"/>
    </location>
</feature>
<feature type="strand" evidence="13">
    <location>
        <begin position="176"/>
        <end position="184"/>
    </location>
</feature>
<feature type="turn" evidence="13">
    <location>
        <begin position="185"/>
        <end position="187"/>
    </location>
</feature>
<feature type="strand" evidence="13">
    <location>
        <begin position="188"/>
        <end position="197"/>
    </location>
</feature>
<feature type="turn" evidence="13">
    <location>
        <begin position="198"/>
        <end position="201"/>
    </location>
</feature>
<feature type="strand" evidence="13">
    <location>
        <begin position="202"/>
        <end position="211"/>
    </location>
</feature>
<feature type="helix" evidence="13">
    <location>
        <begin position="216"/>
        <end position="218"/>
    </location>
</feature>
<feature type="helix" evidence="13">
    <location>
        <begin position="219"/>
        <end position="235"/>
    </location>
</feature>
<feature type="helix" evidence="13">
    <location>
        <begin position="241"/>
        <end position="251"/>
    </location>
</feature>
<feature type="helix" evidence="13">
    <location>
        <begin position="255"/>
        <end position="257"/>
    </location>
</feature>
<organism>
    <name type="scientific">Human cytomegalovirus (strain Merlin)</name>
    <name type="common">HHV-5</name>
    <name type="synonym">Human herpesvirus 5</name>
    <dbReference type="NCBI Taxonomy" id="295027"/>
    <lineage>
        <taxon>Viruses</taxon>
        <taxon>Duplodnaviria</taxon>
        <taxon>Heunggongvirae</taxon>
        <taxon>Peploviricota</taxon>
        <taxon>Herviviricetes</taxon>
        <taxon>Herpesvirales</taxon>
        <taxon>Orthoherpesviridae</taxon>
        <taxon>Betaherpesvirinae</taxon>
        <taxon>Cytomegalovirus</taxon>
        <taxon>Cytomegalovirus humanbeta5</taxon>
        <taxon>Human cytomegalovirus</taxon>
    </lineage>
</organism>
<gene>
    <name evidence="1" type="primary">gL</name>
    <name type="ORF">UL115</name>
</gene>
<keyword id="KW-0002">3D-structure</keyword>
<keyword id="KW-1015">Disulfide bond</keyword>
<keyword id="KW-1169">Fusion of virus membrane with host cell membrane</keyword>
<keyword id="KW-1168">Fusion of virus membrane with host membrane</keyword>
<keyword id="KW-0325">Glycoprotein</keyword>
<keyword id="KW-1032">Host cell membrane</keyword>
<keyword id="KW-1040">Host Golgi apparatus</keyword>
<keyword id="KW-1043">Host membrane</keyword>
<keyword id="KW-0945">Host-virus interaction</keyword>
<keyword id="KW-0472">Membrane</keyword>
<keyword id="KW-1185">Reference proteome</keyword>
<keyword id="KW-0732">Signal</keyword>
<keyword id="KW-1161">Viral attachment to host cell</keyword>
<keyword id="KW-1234">Viral attachment to host entry receptor</keyword>
<keyword id="KW-0261">Viral envelope protein</keyword>
<keyword id="KW-1162">Viral penetration into host cytoplasm</keyword>
<keyword id="KW-0946">Virion</keyword>
<keyword id="KW-1160">Virus entry into host cell</keyword>